<accession>A8AY03</accession>
<keyword id="KW-1185">Reference proteome</keyword>
<keyword id="KW-0687">Ribonucleoprotein</keyword>
<keyword id="KW-0689">Ribosomal protein</keyword>
<evidence type="ECO:0000255" key="1">
    <source>
        <dbReference type="HAMAP-Rule" id="MF_00402"/>
    </source>
</evidence>
<evidence type="ECO:0000305" key="2"/>
<comment type="function">
    <text evidence="1">This protein is located at the 30S-50S ribosomal subunit interface and may play a role in the structure and function of the aminoacyl-tRNA binding site.</text>
</comment>
<comment type="similarity">
    <text evidence="1">Belongs to the bacterial ribosomal protein bL19 family.</text>
</comment>
<proteinExistence type="inferred from homology"/>
<feature type="chain" id="PRO_1000080377" description="Large ribosomal subunit protein bL19">
    <location>
        <begin position="1"/>
        <end position="115"/>
    </location>
</feature>
<gene>
    <name evidence="1" type="primary">rplS</name>
    <name type="ordered locus">SGO_1383</name>
</gene>
<dbReference type="EMBL" id="CP000725">
    <property type="protein sequence ID" value="ABV09857.1"/>
    <property type="molecule type" value="Genomic_DNA"/>
</dbReference>
<dbReference type="RefSeq" id="WP_008809321.1">
    <property type="nucleotide sequence ID" value="NC_009785.1"/>
</dbReference>
<dbReference type="SMR" id="A8AY03"/>
<dbReference type="STRING" id="467705.SGO_1383"/>
<dbReference type="GeneID" id="93787644"/>
<dbReference type="KEGG" id="sgo:SGO_1383"/>
<dbReference type="eggNOG" id="COG0335">
    <property type="taxonomic scope" value="Bacteria"/>
</dbReference>
<dbReference type="HOGENOM" id="CLU_103507_2_1_9"/>
<dbReference type="Proteomes" id="UP000001131">
    <property type="component" value="Chromosome"/>
</dbReference>
<dbReference type="GO" id="GO:0022625">
    <property type="term" value="C:cytosolic large ribosomal subunit"/>
    <property type="evidence" value="ECO:0007669"/>
    <property type="project" value="TreeGrafter"/>
</dbReference>
<dbReference type="GO" id="GO:0003735">
    <property type="term" value="F:structural constituent of ribosome"/>
    <property type="evidence" value="ECO:0007669"/>
    <property type="project" value="InterPro"/>
</dbReference>
<dbReference type="GO" id="GO:0006412">
    <property type="term" value="P:translation"/>
    <property type="evidence" value="ECO:0007669"/>
    <property type="project" value="UniProtKB-UniRule"/>
</dbReference>
<dbReference type="FunFam" id="2.30.30.790:FF:000001">
    <property type="entry name" value="50S ribosomal protein L19"/>
    <property type="match status" value="1"/>
</dbReference>
<dbReference type="Gene3D" id="2.30.30.790">
    <property type="match status" value="1"/>
</dbReference>
<dbReference type="HAMAP" id="MF_00402">
    <property type="entry name" value="Ribosomal_bL19"/>
    <property type="match status" value="1"/>
</dbReference>
<dbReference type="InterPro" id="IPR001857">
    <property type="entry name" value="Ribosomal_bL19"/>
</dbReference>
<dbReference type="InterPro" id="IPR018257">
    <property type="entry name" value="Ribosomal_bL19_CS"/>
</dbReference>
<dbReference type="InterPro" id="IPR038657">
    <property type="entry name" value="Ribosomal_bL19_sf"/>
</dbReference>
<dbReference type="InterPro" id="IPR008991">
    <property type="entry name" value="Translation_prot_SH3-like_sf"/>
</dbReference>
<dbReference type="NCBIfam" id="TIGR01024">
    <property type="entry name" value="rplS_bact"/>
    <property type="match status" value="1"/>
</dbReference>
<dbReference type="PANTHER" id="PTHR15680:SF9">
    <property type="entry name" value="LARGE RIBOSOMAL SUBUNIT PROTEIN BL19M"/>
    <property type="match status" value="1"/>
</dbReference>
<dbReference type="PANTHER" id="PTHR15680">
    <property type="entry name" value="RIBOSOMAL PROTEIN L19"/>
    <property type="match status" value="1"/>
</dbReference>
<dbReference type="Pfam" id="PF01245">
    <property type="entry name" value="Ribosomal_L19"/>
    <property type="match status" value="1"/>
</dbReference>
<dbReference type="PIRSF" id="PIRSF002191">
    <property type="entry name" value="Ribosomal_L19"/>
    <property type="match status" value="1"/>
</dbReference>
<dbReference type="PRINTS" id="PR00061">
    <property type="entry name" value="RIBOSOMALL19"/>
</dbReference>
<dbReference type="SUPFAM" id="SSF50104">
    <property type="entry name" value="Translation proteins SH3-like domain"/>
    <property type="match status" value="1"/>
</dbReference>
<dbReference type="PROSITE" id="PS01015">
    <property type="entry name" value="RIBOSOMAL_L19"/>
    <property type="match status" value="1"/>
</dbReference>
<reference key="1">
    <citation type="journal article" date="2007" name="J. Bacteriol.">
        <title>Genome-wide transcriptional changes in Streptococcus gordonii in response to competence signaling peptide.</title>
        <authorList>
            <person name="Vickerman M.M."/>
            <person name="Iobst S."/>
            <person name="Jesionowski A.M."/>
            <person name="Gill S.R."/>
        </authorList>
    </citation>
    <scope>NUCLEOTIDE SEQUENCE [LARGE SCALE GENOMIC DNA]</scope>
    <source>
        <strain>Challis / ATCC 35105 / BCRC 15272 / CH1 / DL1 / V288</strain>
    </source>
</reference>
<organism>
    <name type="scientific">Streptococcus gordonii (strain Challis / ATCC 35105 / BCRC 15272 / CH1 / DL1 / V288)</name>
    <dbReference type="NCBI Taxonomy" id="467705"/>
    <lineage>
        <taxon>Bacteria</taxon>
        <taxon>Bacillati</taxon>
        <taxon>Bacillota</taxon>
        <taxon>Bacilli</taxon>
        <taxon>Lactobacillales</taxon>
        <taxon>Streptococcaceae</taxon>
        <taxon>Streptococcus</taxon>
    </lineage>
</organism>
<protein>
    <recommendedName>
        <fullName evidence="1">Large ribosomal subunit protein bL19</fullName>
    </recommendedName>
    <alternativeName>
        <fullName evidence="2">50S ribosomal protein L19</fullName>
    </alternativeName>
</protein>
<sequence length="115" mass="13081">MNPLIQSLTEGQLRTDIPAFRPGDTVRVHAKVVEGTRERIQIFEGVVIARKGAGISENYTVRKISNGVGVERTFPIHTPRVDKIEVVRYGKVRRAKLYYLRALQGKAARIKEIRR</sequence>
<name>RL19_STRGC</name>